<dbReference type="EC" id="3.1.21.2" evidence="1"/>
<dbReference type="EMBL" id="AP008971">
    <property type="protein sequence ID" value="BAG08136.1"/>
    <property type="molecule type" value="Genomic_DNA"/>
</dbReference>
<dbReference type="RefSeq" id="WP_002841740.1">
    <property type="nucleotide sequence ID" value="NC_010376.1"/>
</dbReference>
<dbReference type="SMR" id="B0S196"/>
<dbReference type="STRING" id="334413.FMG_0718"/>
<dbReference type="KEGG" id="fma:FMG_0718"/>
<dbReference type="eggNOG" id="COG0648">
    <property type="taxonomic scope" value="Bacteria"/>
</dbReference>
<dbReference type="HOGENOM" id="CLU_025885_4_1_9"/>
<dbReference type="Proteomes" id="UP000001319">
    <property type="component" value="Chromosome"/>
</dbReference>
<dbReference type="GO" id="GO:0008833">
    <property type="term" value="F:deoxyribonuclease IV (phage-T4-induced) activity"/>
    <property type="evidence" value="ECO:0007669"/>
    <property type="project" value="UniProtKB-UniRule"/>
</dbReference>
<dbReference type="GO" id="GO:0003677">
    <property type="term" value="F:DNA binding"/>
    <property type="evidence" value="ECO:0007669"/>
    <property type="project" value="InterPro"/>
</dbReference>
<dbReference type="GO" id="GO:0003906">
    <property type="term" value="F:DNA-(apurinic or apyrimidinic site) endonuclease activity"/>
    <property type="evidence" value="ECO:0007669"/>
    <property type="project" value="TreeGrafter"/>
</dbReference>
<dbReference type="GO" id="GO:0008081">
    <property type="term" value="F:phosphoric diester hydrolase activity"/>
    <property type="evidence" value="ECO:0007669"/>
    <property type="project" value="TreeGrafter"/>
</dbReference>
<dbReference type="GO" id="GO:0008270">
    <property type="term" value="F:zinc ion binding"/>
    <property type="evidence" value="ECO:0007669"/>
    <property type="project" value="UniProtKB-UniRule"/>
</dbReference>
<dbReference type="GO" id="GO:0006284">
    <property type="term" value="P:base-excision repair"/>
    <property type="evidence" value="ECO:0007669"/>
    <property type="project" value="TreeGrafter"/>
</dbReference>
<dbReference type="CDD" id="cd00019">
    <property type="entry name" value="AP2Ec"/>
    <property type="match status" value="1"/>
</dbReference>
<dbReference type="FunFam" id="3.20.20.150:FF:000001">
    <property type="entry name" value="Probable endonuclease 4"/>
    <property type="match status" value="1"/>
</dbReference>
<dbReference type="Gene3D" id="3.20.20.150">
    <property type="entry name" value="Divalent-metal-dependent TIM barrel enzymes"/>
    <property type="match status" value="1"/>
</dbReference>
<dbReference type="HAMAP" id="MF_00152">
    <property type="entry name" value="Nfo"/>
    <property type="match status" value="1"/>
</dbReference>
<dbReference type="InterPro" id="IPR001719">
    <property type="entry name" value="AP_endonuc_2"/>
</dbReference>
<dbReference type="InterPro" id="IPR018246">
    <property type="entry name" value="AP_endonuc_F2_Zn_BS"/>
</dbReference>
<dbReference type="InterPro" id="IPR036237">
    <property type="entry name" value="Xyl_isomerase-like_sf"/>
</dbReference>
<dbReference type="InterPro" id="IPR013022">
    <property type="entry name" value="Xyl_isomerase-like_TIM-brl"/>
</dbReference>
<dbReference type="NCBIfam" id="TIGR00587">
    <property type="entry name" value="nfo"/>
    <property type="match status" value="1"/>
</dbReference>
<dbReference type="PANTHER" id="PTHR21445:SF0">
    <property type="entry name" value="APURINIC-APYRIMIDINIC ENDONUCLEASE"/>
    <property type="match status" value="1"/>
</dbReference>
<dbReference type="PANTHER" id="PTHR21445">
    <property type="entry name" value="ENDONUCLEASE IV ENDODEOXYRIBONUCLEASE IV"/>
    <property type="match status" value="1"/>
</dbReference>
<dbReference type="Pfam" id="PF01261">
    <property type="entry name" value="AP_endonuc_2"/>
    <property type="match status" value="1"/>
</dbReference>
<dbReference type="SMART" id="SM00518">
    <property type="entry name" value="AP2Ec"/>
    <property type="match status" value="1"/>
</dbReference>
<dbReference type="SUPFAM" id="SSF51658">
    <property type="entry name" value="Xylose isomerase-like"/>
    <property type="match status" value="1"/>
</dbReference>
<dbReference type="PROSITE" id="PS00730">
    <property type="entry name" value="AP_NUCLEASE_F2_2"/>
    <property type="match status" value="1"/>
</dbReference>
<dbReference type="PROSITE" id="PS00731">
    <property type="entry name" value="AP_NUCLEASE_F2_3"/>
    <property type="match status" value="1"/>
</dbReference>
<dbReference type="PROSITE" id="PS51432">
    <property type="entry name" value="AP_NUCLEASE_F2_4"/>
    <property type="match status" value="1"/>
</dbReference>
<keyword id="KW-0227">DNA damage</keyword>
<keyword id="KW-0234">DNA repair</keyword>
<keyword id="KW-0255">Endonuclease</keyword>
<keyword id="KW-0378">Hydrolase</keyword>
<keyword id="KW-0479">Metal-binding</keyword>
<keyword id="KW-0540">Nuclease</keyword>
<keyword id="KW-1185">Reference proteome</keyword>
<keyword id="KW-0862">Zinc</keyword>
<sequence>MNRIGCHLSTSKGLHKTIEQCLEINADTFQFFPRNPRGSKSRLIPKKEIDKFLELRKIHNINKIVCHGAYTMNLCSDREDLRKLAVKLINEDMKKIQDMRINHYVLHPGSHKNQGIEEGLKLIVEGINKVDVSNGQMICIETMSGKGSELGCDIDQIAYIINNASIPLYVCIDTCHLFSSGIRLDNFDDYLDEFDKKIGIDKIKVIHCNDSMMPFGANKDRHEKFGKGLIGEQDLFNVIFNERLKDRPIILETPNDLDGYKIEIEEIRRNFNELRQN</sequence>
<protein>
    <recommendedName>
        <fullName evidence="1">Probable endonuclease 4</fullName>
        <ecNumber evidence="1">3.1.21.2</ecNumber>
    </recommendedName>
    <alternativeName>
        <fullName evidence="1">Endodeoxyribonuclease IV</fullName>
    </alternativeName>
    <alternativeName>
        <fullName evidence="1">Endonuclease IV</fullName>
    </alternativeName>
</protein>
<proteinExistence type="inferred from homology"/>
<organism>
    <name type="scientific">Finegoldia magna (strain ATCC 29328 / DSM 20472 / WAL 2508)</name>
    <name type="common">Peptostreptococcus magnus</name>
    <dbReference type="NCBI Taxonomy" id="334413"/>
    <lineage>
        <taxon>Bacteria</taxon>
        <taxon>Bacillati</taxon>
        <taxon>Bacillota</taxon>
        <taxon>Tissierellia</taxon>
        <taxon>Tissierellales</taxon>
        <taxon>Peptoniphilaceae</taxon>
        <taxon>Finegoldia</taxon>
    </lineage>
</organism>
<reference key="1">
    <citation type="journal article" date="2008" name="DNA Res.">
        <title>Complete genome sequence of Finegoldia magna, an anaerobic opportunistic pathogen.</title>
        <authorList>
            <person name="Goto T."/>
            <person name="Yamashita A."/>
            <person name="Hirakawa H."/>
            <person name="Matsutani M."/>
            <person name="Todo K."/>
            <person name="Ohshima K."/>
            <person name="Toh H."/>
            <person name="Miyamoto K."/>
            <person name="Kuhara S."/>
            <person name="Hattori M."/>
            <person name="Shimizu T."/>
            <person name="Akimoto S."/>
        </authorList>
    </citation>
    <scope>NUCLEOTIDE SEQUENCE [LARGE SCALE GENOMIC DNA]</scope>
    <source>
        <strain>ATCC 29328 / DSM 20472 / WAL 2508</strain>
    </source>
</reference>
<feature type="chain" id="PRO_1000118099" description="Probable endonuclease 4">
    <location>
        <begin position="1"/>
        <end position="277"/>
    </location>
</feature>
<feature type="binding site" evidence="1">
    <location>
        <position position="67"/>
    </location>
    <ligand>
        <name>Zn(2+)</name>
        <dbReference type="ChEBI" id="CHEBI:29105"/>
        <label>1</label>
    </ligand>
</feature>
<feature type="binding site" evidence="1">
    <location>
        <position position="107"/>
    </location>
    <ligand>
        <name>Zn(2+)</name>
        <dbReference type="ChEBI" id="CHEBI:29105"/>
        <label>1</label>
    </ligand>
</feature>
<feature type="binding site" evidence="1">
    <location>
        <position position="141"/>
    </location>
    <ligand>
        <name>Zn(2+)</name>
        <dbReference type="ChEBI" id="CHEBI:29105"/>
        <label>1</label>
    </ligand>
</feature>
<feature type="binding site" evidence="1">
    <location>
        <position position="141"/>
    </location>
    <ligand>
        <name>Zn(2+)</name>
        <dbReference type="ChEBI" id="CHEBI:29105"/>
        <label>2</label>
    </ligand>
</feature>
<feature type="binding site" evidence="1">
    <location>
        <position position="173"/>
    </location>
    <ligand>
        <name>Zn(2+)</name>
        <dbReference type="ChEBI" id="CHEBI:29105"/>
        <label>2</label>
    </ligand>
</feature>
<feature type="binding site" evidence="1">
    <location>
        <position position="176"/>
    </location>
    <ligand>
        <name>Zn(2+)</name>
        <dbReference type="ChEBI" id="CHEBI:29105"/>
        <label>3</label>
    </ligand>
</feature>
<feature type="binding site" evidence="1">
    <location>
        <position position="207"/>
    </location>
    <ligand>
        <name>Zn(2+)</name>
        <dbReference type="ChEBI" id="CHEBI:29105"/>
        <label>2</label>
    </ligand>
</feature>
<feature type="binding site" evidence="1">
    <location>
        <position position="220"/>
    </location>
    <ligand>
        <name>Zn(2+)</name>
        <dbReference type="ChEBI" id="CHEBI:29105"/>
        <label>3</label>
    </ligand>
</feature>
<feature type="binding site" evidence="1">
    <location>
        <position position="222"/>
    </location>
    <ligand>
        <name>Zn(2+)</name>
        <dbReference type="ChEBI" id="CHEBI:29105"/>
        <label>3</label>
    </ligand>
</feature>
<feature type="binding site" evidence="1">
    <location>
        <position position="252"/>
    </location>
    <ligand>
        <name>Zn(2+)</name>
        <dbReference type="ChEBI" id="CHEBI:29105"/>
        <label>2</label>
    </ligand>
</feature>
<name>END4_FINM2</name>
<comment type="function">
    <text evidence="1">Endonuclease IV plays a role in DNA repair. It cleaves phosphodiester bonds at apurinic or apyrimidinic (AP) sites, generating a 3'-hydroxyl group and a 5'-terminal sugar phosphate.</text>
</comment>
<comment type="catalytic activity">
    <reaction evidence="1">
        <text>Endonucleolytic cleavage to 5'-phosphooligonucleotide end-products.</text>
        <dbReference type="EC" id="3.1.21.2"/>
    </reaction>
</comment>
<comment type="cofactor">
    <cofactor evidence="1">
        <name>Zn(2+)</name>
        <dbReference type="ChEBI" id="CHEBI:29105"/>
    </cofactor>
    <text evidence="1">Binds 3 Zn(2+) ions.</text>
</comment>
<comment type="similarity">
    <text evidence="1">Belongs to the AP endonuclease 2 family.</text>
</comment>
<gene>
    <name evidence="1" type="primary">nfo</name>
    <name type="ordered locus">FMG_0718</name>
</gene>
<accession>B0S196</accession>
<evidence type="ECO:0000255" key="1">
    <source>
        <dbReference type="HAMAP-Rule" id="MF_00152"/>
    </source>
</evidence>